<dbReference type="EMBL" id="AE017355">
    <property type="protein sequence ID" value="AAT63814.1"/>
    <property type="molecule type" value="Genomic_DNA"/>
</dbReference>
<dbReference type="RefSeq" id="WP_000392247.1">
    <property type="nucleotide sequence ID" value="NC_005957.1"/>
</dbReference>
<dbReference type="RefSeq" id="YP_038436.1">
    <property type="nucleotide sequence ID" value="NC_005957.1"/>
</dbReference>
<dbReference type="KEGG" id="btk:BT9727_4118"/>
<dbReference type="PATRIC" id="fig|281309.8.peg.4395"/>
<dbReference type="HOGENOM" id="CLU_146610_2_1_9"/>
<dbReference type="Proteomes" id="UP000001301">
    <property type="component" value="Chromosome"/>
</dbReference>
<dbReference type="HAMAP" id="MF_01448">
    <property type="entry name" value="UPF0473"/>
    <property type="match status" value="1"/>
</dbReference>
<dbReference type="InterPro" id="IPR009711">
    <property type="entry name" value="UPF0473"/>
</dbReference>
<dbReference type="NCBIfam" id="NF010216">
    <property type="entry name" value="PRK13678.1-3"/>
    <property type="match status" value="1"/>
</dbReference>
<dbReference type="PANTHER" id="PTHR40066">
    <property type="entry name" value="UPF0473 PROTEIN CBO2561/CLC_2432"/>
    <property type="match status" value="1"/>
</dbReference>
<dbReference type="PANTHER" id="PTHR40066:SF1">
    <property type="entry name" value="UPF0473 PROTEIN CBO2561_CLC_2432"/>
    <property type="match status" value="1"/>
</dbReference>
<dbReference type="Pfam" id="PF06949">
    <property type="entry name" value="DUF1292"/>
    <property type="match status" value="1"/>
</dbReference>
<evidence type="ECO:0000255" key="1">
    <source>
        <dbReference type="HAMAP-Rule" id="MF_01448"/>
    </source>
</evidence>
<protein>
    <recommendedName>
        <fullName evidence="1">UPF0473 protein BT9727_4118</fullName>
    </recommendedName>
</protein>
<proteinExistence type="inferred from homology"/>
<reference key="1">
    <citation type="journal article" date="2006" name="J. Bacteriol.">
        <title>Pathogenomic sequence analysis of Bacillus cereus and Bacillus thuringiensis isolates closely related to Bacillus anthracis.</title>
        <authorList>
            <person name="Han C.S."/>
            <person name="Xie G."/>
            <person name="Challacombe J.F."/>
            <person name="Altherr M.R."/>
            <person name="Bhotika S.S."/>
            <person name="Bruce D."/>
            <person name="Campbell C.S."/>
            <person name="Campbell M.L."/>
            <person name="Chen J."/>
            <person name="Chertkov O."/>
            <person name="Cleland C."/>
            <person name="Dimitrijevic M."/>
            <person name="Doggett N.A."/>
            <person name="Fawcett J.J."/>
            <person name="Glavina T."/>
            <person name="Goodwin L.A."/>
            <person name="Hill K.K."/>
            <person name="Hitchcock P."/>
            <person name="Jackson P.J."/>
            <person name="Keim P."/>
            <person name="Kewalramani A.R."/>
            <person name="Longmire J."/>
            <person name="Lucas S."/>
            <person name="Malfatti S."/>
            <person name="McMurry K."/>
            <person name="Meincke L.J."/>
            <person name="Misra M."/>
            <person name="Moseman B.L."/>
            <person name="Mundt M."/>
            <person name="Munk A.C."/>
            <person name="Okinaka R.T."/>
            <person name="Parson-Quintana B."/>
            <person name="Reilly L.P."/>
            <person name="Richardson P."/>
            <person name="Robinson D.L."/>
            <person name="Rubin E."/>
            <person name="Saunders E."/>
            <person name="Tapia R."/>
            <person name="Tesmer J.G."/>
            <person name="Thayer N."/>
            <person name="Thompson L.S."/>
            <person name="Tice H."/>
            <person name="Ticknor L.O."/>
            <person name="Wills P.L."/>
            <person name="Brettin T.S."/>
            <person name="Gilna P."/>
        </authorList>
    </citation>
    <scope>NUCLEOTIDE SEQUENCE [LARGE SCALE GENOMIC DNA]</scope>
    <source>
        <strain>97-27</strain>
    </source>
</reference>
<feature type="chain" id="PRO_0000304820" description="UPF0473 protein BT9727_4118">
    <location>
        <begin position="1"/>
        <end position="92"/>
    </location>
</feature>
<organism>
    <name type="scientific">Bacillus thuringiensis subsp. konkukian (strain 97-27)</name>
    <dbReference type="NCBI Taxonomy" id="281309"/>
    <lineage>
        <taxon>Bacteria</taxon>
        <taxon>Bacillati</taxon>
        <taxon>Bacillota</taxon>
        <taxon>Bacilli</taxon>
        <taxon>Bacillales</taxon>
        <taxon>Bacillaceae</taxon>
        <taxon>Bacillus</taxon>
        <taxon>Bacillus cereus group</taxon>
    </lineage>
</organism>
<comment type="similarity">
    <text evidence="1">Belongs to the UPF0473 family.</text>
</comment>
<sequence length="92" mass="10620">MEENQITIVDEKGNEHLCEIIFTFDAEKFGKKSYVVFSPIGEVDEDGDQIYDAMAYEQNEEEGGTLLPIESEEEWEMVQEMFNTLADEQEAE</sequence>
<name>Y4118_BACHK</name>
<accession>Q6HDE0</accession>
<gene>
    <name type="ordered locus">BT9727_4118</name>
</gene>